<comment type="function">
    <text evidence="1">Endonuclease that specifically degrades the RNA of RNA-DNA hybrids.</text>
</comment>
<comment type="catalytic activity">
    <reaction evidence="1">
        <text>Endonucleolytic cleavage to 5'-phosphomonoester.</text>
        <dbReference type="EC" id="3.1.26.4"/>
    </reaction>
</comment>
<comment type="cofactor">
    <cofactor evidence="1">
        <name>Mn(2+)</name>
        <dbReference type="ChEBI" id="CHEBI:29035"/>
    </cofactor>
    <cofactor evidence="1">
        <name>Mg(2+)</name>
        <dbReference type="ChEBI" id="CHEBI:18420"/>
    </cofactor>
    <text evidence="1">Manganese or magnesium. Binds 1 divalent metal ion per monomer in the absence of substrate. May bind a second metal ion after substrate binding.</text>
</comment>
<comment type="subcellular location">
    <subcellularLocation>
        <location evidence="1">Cytoplasm</location>
    </subcellularLocation>
</comment>
<comment type="similarity">
    <text evidence="1">Belongs to the RNase HII family.</text>
</comment>
<keyword id="KW-0963">Cytoplasm</keyword>
<keyword id="KW-0255">Endonuclease</keyword>
<keyword id="KW-0378">Hydrolase</keyword>
<keyword id="KW-0464">Manganese</keyword>
<keyword id="KW-0479">Metal-binding</keyword>
<keyword id="KW-0540">Nuclease</keyword>
<keyword id="KW-1185">Reference proteome</keyword>
<sequence length="263" mass="28762">MPTSIKAIKESLEAVTSLLDPLFQELATDTRSGVQKALKSRQKVIQAELAEEERLEAMLSYEKALYKKGYKAIAGIDEVGRGPLAGPVVAACVILPKYCKIKGLNDSKKIPKAKHETIYQAVKEKALAIGIGIIDNQLIDEVNIYEATKLAMLEAIKQLEGQLTQPDYLLIDAMTLDIAISQQSILKGDANSLSIAAASIVAKVTRDQMMANYDRIFPGYDFAKNAGYGTKEHLQGLKAYGITPIHRKSFEPVKSMCCDSTNP</sequence>
<organism>
    <name type="scientific">Streptococcus pyogenes serotype M1</name>
    <dbReference type="NCBI Taxonomy" id="301447"/>
    <lineage>
        <taxon>Bacteria</taxon>
        <taxon>Bacillati</taxon>
        <taxon>Bacillota</taxon>
        <taxon>Bacilli</taxon>
        <taxon>Lactobacillales</taxon>
        <taxon>Streptococcaceae</taxon>
        <taxon>Streptococcus</taxon>
    </lineage>
</organism>
<reference key="1">
    <citation type="journal article" date="2001" name="Proc. Natl. Acad. Sci. U.S.A.">
        <title>Complete genome sequence of an M1 strain of Streptococcus pyogenes.</title>
        <authorList>
            <person name="Ferretti J.J."/>
            <person name="McShan W.M."/>
            <person name="Ajdic D.J."/>
            <person name="Savic D.J."/>
            <person name="Savic G."/>
            <person name="Lyon K."/>
            <person name="Primeaux C."/>
            <person name="Sezate S."/>
            <person name="Suvorov A.N."/>
            <person name="Kenton S."/>
            <person name="Lai H.S."/>
            <person name="Lin S.P."/>
            <person name="Qian Y."/>
            <person name="Jia H.G."/>
            <person name="Najar F.Z."/>
            <person name="Ren Q."/>
            <person name="Zhu H."/>
            <person name="Song L."/>
            <person name="White J."/>
            <person name="Yuan X."/>
            <person name="Clifton S.W."/>
            <person name="Roe B.A."/>
            <person name="McLaughlin R.E."/>
        </authorList>
    </citation>
    <scope>NUCLEOTIDE SEQUENCE [LARGE SCALE GENOMIC DNA]</scope>
    <source>
        <strain>ATCC 700294 / SF370 / Serotype M1</strain>
    </source>
</reference>
<reference key="2">
    <citation type="journal article" date="2005" name="J. Infect. Dis.">
        <title>Evolutionary origin and emergence of a highly successful clone of serotype M1 group A Streptococcus involved multiple horizontal gene transfer events.</title>
        <authorList>
            <person name="Sumby P."/>
            <person name="Porcella S.F."/>
            <person name="Madrigal A.G."/>
            <person name="Barbian K.D."/>
            <person name="Virtaneva K."/>
            <person name="Ricklefs S.M."/>
            <person name="Sturdevant D.E."/>
            <person name="Graham M.R."/>
            <person name="Vuopio-Varkila J."/>
            <person name="Hoe N.P."/>
            <person name="Musser J.M."/>
        </authorList>
    </citation>
    <scope>NUCLEOTIDE SEQUENCE [LARGE SCALE GENOMIC DNA]</scope>
    <source>
        <strain>ATCC BAA-947 / MGAS5005 / Serotype M1</strain>
    </source>
</reference>
<gene>
    <name evidence="1" type="primary">rnhB</name>
    <name type="ordered locus">SPy_1162</name>
    <name type="ordered locus">M5005_Spy0883</name>
</gene>
<feature type="chain" id="PRO_0000111636" description="Ribonuclease HII">
    <location>
        <begin position="1"/>
        <end position="263"/>
    </location>
</feature>
<feature type="domain" description="RNase H type-2" evidence="2">
    <location>
        <begin position="71"/>
        <end position="262"/>
    </location>
</feature>
<feature type="binding site" evidence="1">
    <location>
        <position position="77"/>
    </location>
    <ligand>
        <name>a divalent metal cation</name>
        <dbReference type="ChEBI" id="CHEBI:60240"/>
    </ligand>
</feature>
<feature type="binding site" evidence="1">
    <location>
        <position position="78"/>
    </location>
    <ligand>
        <name>a divalent metal cation</name>
        <dbReference type="ChEBI" id="CHEBI:60240"/>
    </ligand>
</feature>
<feature type="binding site" evidence="1">
    <location>
        <position position="172"/>
    </location>
    <ligand>
        <name>a divalent metal cation</name>
        <dbReference type="ChEBI" id="CHEBI:60240"/>
    </ligand>
</feature>
<feature type="sequence conflict" description="In Ref. 2; AAZ51501." evidence="3" ref="2">
    <original>D</original>
    <variation>G</variation>
    <location>
        <position position="221"/>
    </location>
</feature>
<dbReference type="EC" id="3.1.26.4" evidence="1"/>
<dbReference type="EMBL" id="AE004092">
    <property type="protein sequence ID" value="AAK34033.1"/>
    <property type="molecule type" value="Genomic_DNA"/>
</dbReference>
<dbReference type="EMBL" id="CP000017">
    <property type="protein sequence ID" value="AAZ51501.1"/>
    <property type="molecule type" value="Genomic_DNA"/>
</dbReference>
<dbReference type="RefSeq" id="NP_269312.1">
    <property type="nucleotide sequence ID" value="NC_002737.2"/>
</dbReference>
<dbReference type="SMR" id="Q99ZM6"/>
<dbReference type="PaxDb" id="1314-HKU360_00945"/>
<dbReference type="KEGG" id="spy:SPy_1162"/>
<dbReference type="KEGG" id="spz:M5005_Spy0883"/>
<dbReference type="PATRIC" id="fig|160490.10.peg.1014"/>
<dbReference type="HOGENOM" id="CLU_036532_2_1_9"/>
<dbReference type="OMA" id="YPTKLHL"/>
<dbReference type="Proteomes" id="UP000000750">
    <property type="component" value="Chromosome"/>
</dbReference>
<dbReference type="GO" id="GO:0005737">
    <property type="term" value="C:cytoplasm"/>
    <property type="evidence" value="ECO:0007669"/>
    <property type="project" value="UniProtKB-SubCell"/>
</dbReference>
<dbReference type="GO" id="GO:0032299">
    <property type="term" value="C:ribonuclease H2 complex"/>
    <property type="evidence" value="ECO:0007669"/>
    <property type="project" value="TreeGrafter"/>
</dbReference>
<dbReference type="GO" id="GO:0030145">
    <property type="term" value="F:manganese ion binding"/>
    <property type="evidence" value="ECO:0007669"/>
    <property type="project" value="UniProtKB-UniRule"/>
</dbReference>
<dbReference type="GO" id="GO:0003723">
    <property type="term" value="F:RNA binding"/>
    <property type="evidence" value="ECO:0007669"/>
    <property type="project" value="InterPro"/>
</dbReference>
<dbReference type="GO" id="GO:0004523">
    <property type="term" value="F:RNA-DNA hybrid ribonuclease activity"/>
    <property type="evidence" value="ECO:0007669"/>
    <property type="project" value="UniProtKB-UniRule"/>
</dbReference>
<dbReference type="GO" id="GO:0043137">
    <property type="term" value="P:DNA replication, removal of RNA primer"/>
    <property type="evidence" value="ECO:0007669"/>
    <property type="project" value="TreeGrafter"/>
</dbReference>
<dbReference type="GO" id="GO:0006298">
    <property type="term" value="P:mismatch repair"/>
    <property type="evidence" value="ECO:0007669"/>
    <property type="project" value="TreeGrafter"/>
</dbReference>
<dbReference type="CDD" id="cd07182">
    <property type="entry name" value="RNase_HII_bacteria_HII_like"/>
    <property type="match status" value="1"/>
</dbReference>
<dbReference type="FunFam" id="3.30.420.10:FF:000006">
    <property type="entry name" value="Ribonuclease HII"/>
    <property type="match status" value="1"/>
</dbReference>
<dbReference type="Gene3D" id="3.30.420.10">
    <property type="entry name" value="Ribonuclease H-like superfamily/Ribonuclease H"/>
    <property type="match status" value="1"/>
</dbReference>
<dbReference type="HAMAP" id="MF_00052_B">
    <property type="entry name" value="RNase_HII_B"/>
    <property type="match status" value="1"/>
</dbReference>
<dbReference type="InterPro" id="IPR022898">
    <property type="entry name" value="RNase_HII"/>
</dbReference>
<dbReference type="InterPro" id="IPR001352">
    <property type="entry name" value="RNase_HII/HIII"/>
</dbReference>
<dbReference type="InterPro" id="IPR024567">
    <property type="entry name" value="RNase_HII/HIII_dom"/>
</dbReference>
<dbReference type="InterPro" id="IPR012337">
    <property type="entry name" value="RNaseH-like_sf"/>
</dbReference>
<dbReference type="InterPro" id="IPR036397">
    <property type="entry name" value="RNaseH_sf"/>
</dbReference>
<dbReference type="NCBIfam" id="NF000594">
    <property type="entry name" value="PRK00015.1-1"/>
    <property type="match status" value="1"/>
</dbReference>
<dbReference type="NCBIfam" id="NF000595">
    <property type="entry name" value="PRK00015.1-3"/>
    <property type="match status" value="1"/>
</dbReference>
<dbReference type="PANTHER" id="PTHR10954">
    <property type="entry name" value="RIBONUCLEASE H2 SUBUNIT A"/>
    <property type="match status" value="1"/>
</dbReference>
<dbReference type="PANTHER" id="PTHR10954:SF18">
    <property type="entry name" value="RIBONUCLEASE HII"/>
    <property type="match status" value="1"/>
</dbReference>
<dbReference type="Pfam" id="PF01351">
    <property type="entry name" value="RNase_HII"/>
    <property type="match status" value="1"/>
</dbReference>
<dbReference type="SUPFAM" id="SSF53098">
    <property type="entry name" value="Ribonuclease H-like"/>
    <property type="match status" value="1"/>
</dbReference>
<dbReference type="PROSITE" id="PS51975">
    <property type="entry name" value="RNASE_H_2"/>
    <property type="match status" value="1"/>
</dbReference>
<evidence type="ECO:0000255" key="1">
    <source>
        <dbReference type="HAMAP-Rule" id="MF_00052"/>
    </source>
</evidence>
<evidence type="ECO:0000255" key="2">
    <source>
        <dbReference type="PROSITE-ProRule" id="PRU01319"/>
    </source>
</evidence>
<evidence type="ECO:0000305" key="3"/>
<proteinExistence type="inferred from homology"/>
<protein>
    <recommendedName>
        <fullName evidence="1">Ribonuclease HII</fullName>
        <shortName evidence="1">RNase HII</shortName>
        <ecNumber evidence="1">3.1.26.4</ecNumber>
    </recommendedName>
</protein>
<accession>Q99ZM6</accession>
<accession>Q48YS1</accession>
<name>RNH2_STRP1</name>